<dbReference type="EC" id="2.1.1.-"/>
<dbReference type="EC" id="2.7.7.48"/>
<dbReference type="EC" id="3.6.4.13"/>
<dbReference type="EMBL" id="U18246">
    <property type="protein sequence ID" value="AAC98529.1"/>
    <property type="molecule type" value="Genomic_RNA"/>
</dbReference>
<dbReference type="EMBL" id="EU345431">
    <property type="protein sequence ID" value="ACA50473.1"/>
    <property type="molecule type" value="mRNA"/>
</dbReference>
<dbReference type="RefSeq" id="NP_049235.1">
    <property type="nucleotide sequence ID" value="NC_001981.1"/>
</dbReference>
<dbReference type="SMR" id="Q67724"/>
<dbReference type="GeneID" id="991180"/>
<dbReference type="KEGG" id="vg:991180"/>
<dbReference type="Proteomes" id="UP000006711">
    <property type="component" value="Genome"/>
</dbReference>
<dbReference type="GO" id="GO:0030430">
    <property type="term" value="C:host cell cytoplasm"/>
    <property type="evidence" value="ECO:0007669"/>
    <property type="project" value="UniProtKB-SubCell"/>
</dbReference>
<dbReference type="GO" id="GO:0005524">
    <property type="term" value="F:ATP binding"/>
    <property type="evidence" value="ECO:0007669"/>
    <property type="project" value="UniProtKB-KW"/>
</dbReference>
<dbReference type="GO" id="GO:0016887">
    <property type="term" value="F:ATP hydrolysis activity"/>
    <property type="evidence" value="ECO:0007669"/>
    <property type="project" value="RHEA"/>
</dbReference>
<dbReference type="GO" id="GO:0008174">
    <property type="term" value="F:mRNA methyltransferase activity"/>
    <property type="evidence" value="ECO:0007669"/>
    <property type="project" value="InterPro"/>
</dbReference>
<dbReference type="GO" id="GO:0003723">
    <property type="term" value="F:RNA binding"/>
    <property type="evidence" value="ECO:0007669"/>
    <property type="project" value="InterPro"/>
</dbReference>
<dbReference type="GO" id="GO:0003724">
    <property type="term" value="F:RNA helicase activity"/>
    <property type="evidence" value="ECO:0007669"/>
    <property type="project" value="UniProtKB-EC"/>
</dbReference>
<dbReference type="GO" id="GO:0003968">
    <property type="term" value="F:RNA-directed RNA polymerase activity"/>
    <property type="evidence" value="ECO:0007669"/>
    <property type="project" value="UniProtKB-KW"/>
</dbReference>
<dbReference type="GO" id="GO:0006351">
    <property type="term" value="P:DNA-templated transcription"/>
    <property type="evidence" value="ECO:0007669"/>
    <property type="project" value="InterPro"/>
</dbReference>
<dbReference type="GO" id="GO:0016556">
    <property type="term" value="P:mRNA modification"/>
    <property type="evidence" value="ECO:0007669"/>
    <property type="project" value="InterPro"/>
</dbReference>
<dbReference type="GO" id="GO:0006396">
    <property type="term" value="P:RNA processing"/>
    <property type="evidence" value="ECO:0007669"/>
    <property type="project" value="InterPro"/>
</dbReference>
<dbReference type="CDD" id="cd23258">
    <property type="entry name" value="Alphatetraviridae_RdRp"/>
    <property type="match status" value="1"/>
</dbReference>
<dbReference type="Gene3D" id="3.40.50.300">
    <property type="entry name" value="P-loop containing nucleotide triphosphate hydrolases"/>
    <property type="match status" value="2"/>
</dbReference>
<dbReference type="InterPro" id="IPR027351">
    <property type="entry name" value="(+)RNA_virus_helicase_core_dom"/>
</dbReference>
<dbReference type="InterPro" id="IPR002588">
    <property type="entry name" value="Alphavirus-like_MT_dom"/>
</dbReference>
<dbReference type="InterPro" id="IPR043502">
    <property type="entry name" value="DNA/RNA_pol_sf"/>
</dbReference>
<dbReference type="InterPro" id="IPR027417">
    <property type="entry name" value="P-loop_NTPase"/>
</dbReference>
<dbReference type="InterPro" id="IPR001788">
    <property type="entry name" value="RNA-dep_RNA_pol_alsuvir"/>
</dbReference>
<dbReference type="Pfam" id="PF00978">
    <property type="entry name" value="RdRP_2"/>
    <property type="match status" value="1"/>
</dbReference>
<dbReference type="Pfam" id="PF01443">
    <property type="entry name" value="Viral_helicase1"/>
    <property type="match status" value="1"/>
</dbReference>
<dbReference type="Pfam" id="PF01660">
    <property type="entry name" value="Vmethyltransf"/>
    <property type="match status" value="1"/>
</dbReference>
<dbReference type="SUPFAM" id="SSF56672">
    <property type="entry name" value="DNA/RNA polymerases"/>
    <property type="match status" value="1"/>
</dbReference>
<dbReference type="SUPFAM" id="SSF52540">
    <property type="entry name" value="P-loop containing nucleoside triphosphate hydrolases"/>
    <property type="match status" value="1"/>
</dbReference>
<dbReference type="PROSITE" id="PS51743">
    <property type="entry name" value="ALPHAVIRUS_MT"/>
    <property type="match status" value="1"/>
</dbReference>
<dbReference type="PROSITE" id="PS51657">
    <property type="entry name" value="PSRV_HELICASE"/>
    <property type="match status" value="1"/>
</dbReference>
<sequence length="1704" mass="187842">MYAKATDVARVYAAADVAYANVLQQRAVKLDFAPPLKALETLHRLYYPLRFKGGTLPPTQHPILAGHQRVAEEVLHNFARGRSTVLEIGPSLHSALKLHGAPNAPVADYHGCTKYGTRDGSRHITALESRSVATGRPEFKADASLLANGIASRTFCVDGVGSCAFKSRVGIANHSLYDVTLEELANAFENHGLHMVRAFMHMPEELLYMDNVVNAELGYRFHVIEEPMAVKDCAFQGGDLRLHFPELDFINESQERRIERLAARGSYSRRAVIFSGDDDWGDAYLHDFHTWLAYLLVRNYPTPFGFSLHIEVQRRHGSSIELRITRAPPGDRMLAVVPRTSQGLCRIPNIFYYADASGTEHKTILTSQHKVNMLLNFMQTRPEKELVDMTVLMSFARARLRAIVVASEVTESSWNISPADLVRTVVSLYVLHIIERRRAAVAVKTAKDDVFGETSFWESLKHVLGSCCGLRNLKGTDVVFTKRVVDKYRVHSLGDIICDVRLSPEQVGFLPSRVPPARVFHDREELEVLREAGCYNERPVPSTPPVEEPQGFDADLWHATAASLPEYRATLQAGLNTDVKQLKITLENALKTIDGLTLSPVRGLEMYEGPPGSGKTGTLIAALEAAGGKALYVAPTRELREAMDRRIKPPSASRTQHVALAILRRATAEGAPFATVVIDECFMFPLVYVAIVHALSPSSRIVLVGDVHQIGFIDFQGTSANMPLVRDVVKQCRRRTFNQTKRCPADVVATTFFQSLYPGCTTTSGCVASISHVAPDYRNSQAQTLCFTQEEKSRHGAEGAMTVHEAQGRTFASVILHYNGSTAEQKLLAEKSHLLVGITRHTNHLYIRDPTGDIERQLNHSAKAEVFTDIPAPLEITTVKPSEEVQRNEVMATIPPQSPTPHGAIHLLRKNFGDQPDCGCVALAKTGYEVFGGRAKINVELAEPDATPKPHRAFQEGVQWVKVTNASNKHQALQTLLSRYTKRSADLPLHEAKEDVKRMLNSLDRHWDWTVTEDARDRAVFETQLKFTQRGGTVEDLLEPDDPYIRDIDFLMKTQQKVSPKPINTGKVGQGIAAHSKSLNFVLAAWIRILEEILRTGSRTVRYSNGLPDEEEAMLLEAKINQVPHATFVSADWTEFDTAHNNTSELLFAALLERIGTPAAAVNLFRERCGKRTLRAKGLGSVEVDGLLDSGAAWTPCRNTIFSAAVMLTLFRGVKFAAFKGDDSLLCGSHYLRFDASRLHMGERYKTKHLKVEVQKIVPYIGLLVSAEQVVLDPVRSALKIFGRCYTSELLYSKYVEAVRDITKGWSDARYHSLLCHMSACYYNYAPESAAYIIDAVVRFGRGDFPFEQLRVVRAHVQAPDAYSSTYPANVRASCLDHVFEPRQAAAPAGFVATCAKPETPSSLTAKAGVSATTSHVATGTAPPESPWDAPAANSFSELLTPETPSTSSSAVIVFIGLLYIVWKVAQWWRHRKRTEDLNSRKPPSQDRQSRSSECLDRSGERTGSSLTAPTAPSPSFSFSERARLATGPTVAAATSPSATPSCATDQVAARTTPDFAPFLGSQSARAVSKPYRPPTTARWKEVTPLHAWKGVTGDRPEVREDPETAAVVQALISGRYPQKTKLSSDASKGYSRTKGCSQSTSFPAPSADYQARDCQTVRVCRAAAEMARSCIHEPLASSAASADLKRIRSTSDSVPDVKISKSA</sequence>
<accession>Q67724</accession>
<organismHost>
    <name type="scientific">Helicoverpa armigera</name>
    <name type="common">Cotton bollworm</name>
    <name type="synonym">Heliothis armigera</name>
    <dbReference type="NCBI Taxonomy" id="29058"/>
</organismHost>
<name>RDRP_HASV</name>
<keyword id="KW-0067">ATP-binding</keyword>
<keyword id="KW-0347">Helicase</keyword>
<keyword id="KW-1035">Host cytoplasm</keyword>
<keyword id="KW-0378">Hydrolase</keyword>
<keyword id="KW-0547">Nucleotide-binding</keyword>
<keyword id="KW-0548">Nucleotidyltransferase</keyword>
<keyword id="KW-1185">Reference proteome</keyword>
<keyword id="KW-0696">RNA-directed RNA polymerase</keyword>
<keyword id="KW-0808">Transferase</keyword>
<evidence type="ECO:0000255" key="1">
    <source>
        <dbReference type="PROSITE-ProRule" id="PRU01079"/>
    </source>
</evidence>
<evidence type="ECO:0000256" key="2">
    <source>
        <dbReference type="SAM" id="MobiDB-lite"/>
    </source>
</evidence>
<evidence type="ECO:0000269" key="3">
    <source>
    </source>
</evidence>
<evidence type="ECO:0000269" key="4">
    <source>
    </source>
</evidence>
<evidence type="ECO:0000305" key="5"/>
<organism>
    <name type="scientific">Helicoverpa armigera stunt virus</name>
    <name type="common">HaSV</name>
    <dbReference type="NCBI Taxonomy" id="37206"/>
    <lineage>
        <taxon>Viruses</taxon>
        <taxon>Riboviria</taxon>
        <taxon>Orthornavirae</taxon>
        <taxon>Kitrinoviricota</taxon>
        <taxon>Alsuviricetes</taxon>
        <taxon>Hepelivirales</taxon>
        <taxon>Alphatetraviridae</taxon>
        <taxon>Omegatetravirus</taxon>
    </lineage>
</organism>
<proteinExistence type="evidence at transcript level"/>
<reference key="1">
    <citation type="journal article" date="1995" name="Virology">
        <title>The larger genomic RNA of Helicoverpa armigera stunt tetravirus encodes the viral RNA polymerase and has a novel 3'-terminal tRNA-like structure.</title>
        <authorList>
            <person name="Gordon K.H."/>
            <person name="Johnson K.N."/>
            <person name="Hanzlik T.N."/>
        </authorList>
    </citation>
    <scope>NUCLEOTIDE SEQUENCE [GENOMIC RNA]</scope>
    <scope>FUNCTION</scope>
</reference>
<reference key="2">
    <citation type="journal article" date="2010" name="J. Gen. Virol.">
        <title>Subcellular localization and live-cell imaging of the Helicoverpa armigera stunt virus replicase in mammalian and Spodoptera frugiperda cells.</title>
        <authorList>
            <person name="Short J.R."/>
            <person name="Knox C."/>
            <person name="Dorrington R.A."/>
        </authorList>
    </citation>
    <scope>NUCLEOTIDE SEQUENCE [MRNA]</scope>
    <scope>SUBCELLULAR LOCATION</scope>
</reference>
<feature type="chain" id="PRO_0000402490" description="Methyltransferase/helicase/RNA-directed RNA polymerase">
    <location>
        <begin position="1"/>
        <end position="1704"/>
    </location>
</feature>
<feature type="domain" description="Alphavirus-like MT" evidence="1">
    <location>
        <begin position="52"/>
        <end position="295"/>
    </location>
</feature>
<feature type="domain" description="(+)RNA virus helicase ATP-binding">
    <location>
        <begin position="575"/>
        <end position="737"/>
    </location>
</feature>
<feature type="domain" description="(+)RNA virus helicase C-terminal">
    <location>
        <begin position="738"/>
        <end position="880"/>
    </location>
</feature>
<feature type="region of interest" description="Disordered" evidence="2">
    <location>
        <begin position="1475"/>
        <end position="1518"/>
    </location>
</feature>
<feature type="region of interest" description="Disordered" evidence="2">
    <location>
        <begin position="1621"/>
        <end position="1649"/>
    </location>
</feature>
<feature type="region of interest" description="Disordered" evidence="2">
    <location>
        <begin position="1678"/>
        <end position="1704"/>
    </location>
</feature>
<feature type="compositionally biased region" description="Basic and acidic residues" evidence="2">
    <location>
        <begin position="1475"/>
        <end position="1501"/>
    </location>
</feature>
<feature type="compositionally biased region" description="Low complexity" evidence="2">
    <location>
        <begin position="1505"/>
        <end position="1518"/>
    </location>
</feature>
<feature type="compositionally biased region" description="Polar residues" evidence="2">
    <location>
        <begin position="1635"/>
        <end position="1644"/>
    </location>
</feature>
<protein>
    <recommendedName>
        <fullName>Methyltransferase/helicase/RNA-directed RNA polymerase</fullName>
        <ecNumber>2.1.1.-</ecNumber>
        <ecNumber>2.7.7.48</ecNumber>
        <ecNumber>3.6.4.13</ecNumber>
    </recommendedName>
</protein>
<comment type="function">
    <text evidence="3">RNA-dependent RNA polymerase replicates the viral genome composed of 2 RNA segments, RNA1 and RNA2.</text>
</comment>
<comment type="catalytic activity">
    <reaction>
        <text>RNA(n) + a ribonucleoside 5'-triphosphate = RNA(n+1) + diphosphate</text>
        <dbReference type="Rhea" id="RHEA:21248"/>
        <dbReference type="Rhea" id="RHEA-COMP:14527"/>
        <dbReference type="Rhea" id="RHEA-COMP:17342"/>
        <dbReference type="ChEBI" id="CHEBI:33019"/>
        <dbReference type="ChEBI" id="CHEBI:61557"/>
        <dbReference type="ChEBI" id="CHEBI:140395"/>
        <dbReference type="EC" id="2.7.7.48"/>
    </reaction>
</comment>
<comment type="catalytic activity">
    <reaction>
        <text>ATP + H2O = ADP + phosphate + H(+)</text>
        <dbReference type="Rhea" id="RHEA:13065"/>
        <dbReference type="ChEBI" id="CHEBI:15377"/>
        <dbReference type="ChEBI" id="CHEBI:15378"/>
        <dbReference type="ChEBI" id="CHEBI:30616"/>
        <dbReference type="ChEBI" id="CHEBI:43474"/>
        <dbReference type="ChEBI" id="CHEBI:456216"/>
        <dbReference type="EC" id="3.6.4.13"/>
    </reaction>
</comment>
<comment type="subcellular location">
    <subcellularLocation>
        <location evidence="4">Host cytoplasm</location>
    </subcellularLocation>
    <text>Localizes to punctate structures partially overlapping late endosomes.</text>
</comment>
<comment type="similarity">
    <text evidence="5">Belongs to the ssRNA positive-strand viruses RNA-directed RNA polymerase family.</text>
</comment>